<reference key="1">
    <citation type="journal article" date="2005" name="J. Bacteriol.">
        <title>Insights on evolution of virulence and resistance from the complete genome analysis of an early methicillin-resistant Staphylococcus aureus strain and a biofilm-producing methicillin-resistant Staphylococcus epidermidis strain.</title>
        <authorList>
            <person name="Gill S.R."/>
            <person name="Fouts D.E."/>
            <person name="Archer G.L."/>
            <person name="Mongodin E.F."/>
            <person name="DeBoy R.T."/>
            <person name="Ravel J."/>
            <person name="Paulsen I.T."/>
            <person name="Kolonay J.F."/>
            <person name="Brinkac L.M."/>
            <person name="Beanan M.J."/>
            <person name="Dodson R.J."/>
            <person name="Daugherty S.C."/>
            <person name="Madupu R."/>
            <person name="Angiuoli S.V."/>
            <person name="Durkin A.S."/>
            <person name="Haft D.H."/>
            <person name="Vamathevan J.J."/>
            <person name="Khouri H."/>
            <person name="Utterback T.R."/>
            <person name="Lee C."/>
            <person name="Dimitrov G."/>
            <person name="Jiang L."/>
            <person name="Qin H."/>
            <person name="Weidman J."/>
            <person name="Tran K."/>
            <person name="Kang K.H."/>
            <person name="Hance I.R."/>
            <person name="Nelson K.E."/>
            <person name="Fraser C.M."/>
        </authorList>
    </citation>
    <scope>NUCLEOTIDE SEQUENCE [LARGE SCALE GENOMIC DNA]</scope>
    <source>
        <strain>COL</strain>
    </source>
</reference>
<protein>
    <recommendedName>
        <fullName>Putative ribose uptake protein RbsU</fullName>
    </recommendedName>
</protein>
<gene>
    <name type="primary">rbsU</name>
    <name type="ordered locus">SACOL0255</name>
</gene>
<name>RBSU_STAAC</name>
<feature type="chain" id="PRO_0000213637" description="Putative ribose uptake protein RbsU">
    <location>
        <begin position="1"/>
        <end position="293"/>
    </location>
</feature>
<feature type="transmembrane region" description="Helical" evidence="2">
    <location>
        <begin position="5"/>
        <end position="24"/>
    </location>
</feature>
<feature type="transmembrane region" description="Helical" evidence="2">
    <location>
        <begin position="34"/>
        <end position="51"/>
    </location>
</feature>
<feature type="transmembrane region" description="Helical" evidence="2">
    <location>
        <begin position="58"/>
        <end position="80"/>
    </location>
</feature>
<feature type="transmembrane region" description="Helical" evidence="2">
    <location>
        <begin position="95"/>
        <end position="114"/>
    </location>
</feature>
<feature type="transmembrane region" description="Helical" evidence="2">
    <location>
        <begin position="121"/>
        <end position="138"/>
    </location>
</feature>
<feature type="transmembrane region" description="Helical" evidence="2">
    <location>
        <begin position="153"/>
        <end position="170"/>
    </location>
</feature>
<feature type="transmembrane region" description="Helical" evidence="2">
    <location>
        <begin position="177"/>
        <end position="199"/>
    </location>
</feature>
<feature type="transmembrane region" description="Helical" evidence="2">
    <location>
        <begin position="212"/>
        <end position="234"/>
    </location>
</feature>
<feature type="transmembrane region" description="Helical" evidence="2">
    <location>
        <begin position="241"/>
        <end position="263"/>
    </location>
</feature>
<feature type="transmembrane region" description="Helical" evidence="2">
    <location>
        <begin position="273"/>
        <end position="292"/>
    </location>
</feature>
<comment type="function">
    <text evidence="1">Could be involved in the uptake of ribose.</text>
</comment>
<comment type="subcellular location">
    <subcellularLocation>
        <location evidence="3">Cell membrane</location>
        <topology evidence="3">Multi-pass membrane protein</topology>
    </subcellularLocation>
</comment>
<comment type="similarity">
    <text evidence="3">Belongs to the GRP transporter (TC 2.A.7.5) family.</text>
</comment>
<dbReference type="EMBL" id="CP000046">
    <property type="protein sequence ID" value="AAW38810.1"/>
    <property type="molecule type" value="Genomic_DNA"/>
</dbReference>
<dbReference type="RefSeq" id="WP_000029204.1">
    <property type="nucleotide sequence ID" value="NZ_JBGOFO010000001.1"/>
</dbReference>
<dbReference type="KEGG" id="sac:SACOL0255"/>
<dbReference type="HOGENOM" id="CLU_076024_0_1_9"/>
<dbReference type="Proteomes" id="UP000000530">
    <property type="component" value="Chromosome"/>
</dbReference>
<dbReference type="GO" id="GO:0005886">
    <property type="term" value="C:plasma membrane"/>
    <property type="evidence" value="ECO:0007669"/>
    <property type="project" value="UniProtKB-SubCell"/>
</dbReference>
<dbReference type="GO" id="GO:0015144">
    <property type="term" value="F:carbohydrate transmembrane transporter activity"/>
    <property type="evidence" value="ECO:0007669"/>
    <property type="project" value="InterPro"/>
</dbReference>
<dbReference type="CDD" id="cd23111">
    <property type="entry name" value="ribose_uptake_RbsU"/>
    <property type="match status" value="1"/>
</dbReference>
<dbReference type="InterPro" id="IPR010651">
    <property type="entry name" value="Sugar_transport"/>
</dbReference>
<dbReference type="NCBIfam" id="NF047342">
    <property type="entry name" value="symport_RbsU"/>
    <property type="match status" value="1"/>
</dbReference>
<dbReference type="PANTHER" id="PTHR16119">
    <property type="entry name" value="TRANSMEMBRANE PROTEIN 144"/>
    <property type="match status" value="1"/>
</dbReference>
<dbReference type="PANTHER" id="PTHR16119:SF17">
    <property type="entry name" value="TRANSMEMBRANE PROTEIN 144"/>
    <property type="match status" value="1"/>
</dbReference>
<dbReference type="Pfam" id="PF06800">
    <property type="entry name" value="Sugar_transport"/>
    <property type="match status" value="1"/>
</dbReference>
<dbReference type="SUPFAM" id="SSF103481">
    <property type="entry name" value="Multidrug resistance efflux transporter EmrE"/>
    <property type="match status" value="1"/>
</dbReference>
<evidence type="ECO:0000250" key="1"/>
<evidence type="ECO:0000255" key="2"/>
<evidence type="ECO:0000305" key="3"/>
<proteinExistence type="inferred from homology"/>
<organism>
    <name type="scientific">Staphylococcus aureus (strain COL)</name>
    <dbReference type="NCBI Taxonomy" id="93062"/>
    <lineage>
        <taxon>Bacteria</taxon>
        <taxon>Bacillati</taxon>
        <taxon>Bacillota</taxon>
        <taxon>Bacilli</taxon>
        <taxon>Bacillales</taxon>
        <taxon>Staphylococcaceae</taxon>
        <taxon>Staphylococcus</taxon>
    </lineage>
</organism>
<sequence>MSIVALLIGLGPLIGWGFFPTVASKFGGKPVHQIIGATVGTLIFAIILAVVTSSGFPTGTNLLFALLSGAGWGFGQIITFKAFELVGSSRAMPVTTAFQLLGASLWGVFALGNWPGIGHKIIGFTALVVILIGARMTVWSERKEASNAKNLRRAVVLLLIGEFGYWLYSAAPQATSIDGLTAFLPQAMGMVIVAVIYGFMNMKAENPFRNKITWLQIISGFFFAFGALTYLISAQPNMNGLATGFILSQTSVVLATLTGIYFLKQHKTSKEMVITIIGLVLILVAASVTVFIK</sequence>
<accession>Q5HJA6</accession>
<keyword id="KW-1003">Cell membrane</keyword>
<keyword id="KW-0472">Membrane</keyword>
<keyword id="KW-0762">Sugar transport</keyword>
<keyword id="KW-0812">Transmembrane</keyword>
<keyword id="KW-1133">Transmembrane helix</keyword>
<keyword id="KW-0813">Transport</keyword>